<reference key="1">
    <citation type="journal article" date="1991" name="J. Bacteriol.">
        <title>Cloning and characterization of a Pseudomonas mendocina KR1 gene cluster encoding toluene-4-monooxygenase.</title>
        <authorList>
            <person name="Yen K.-M."/>
            <person name="Karl M.R."/>
            <person name="Blatt L.M."/>
            <person name="Simon M.J."/>
            <person name="Winter R.B."/>
            <person name="Fausset P.R."/>
            <person name="Lu H.S."/>
            <person name="Harcourt A.A."/>
            <person name="Chen K.K."/>
        </authorList>
    </citation>
    <scope>NUCLEOTIDE SEQUENCE [GENOMIC DNA]</scope>
    <scope>PROTEIN SEQUENCE OF 2-15</scope>
    <scope>FUNCTION</scope>
    <scope>DISRUPTION PHENOTYPE</scope>
    <source>
        <strain>KR1</strain>
    </source>
</reference>
<reference key="2">
    <citation type="journal article" date="2004" name="Appl. Environ. Microbiol.">
        <title>Oxidation of benzene to phenol, catechol, and 1,2,3-trihydroxybenzene by toluene 4-monooxygenase of Pseudomonas mendocina KR1 and toluene 3-monooxygenase of Ralstonia pickettii PKO1.</title>
        <authorList>
            <person name="Tao Y."/>
            <person name="Fishman A."/>
            <person name="Bentley W.E."/>
            <person name="Wood T.K."/>
        </authorList>
    </citation>
    <scope>NUCLEOTIDE SEQUENCE [GENOMIC DNA]</scope>
    <scope>FUNCTION</scope>
    <scope>CATALYTIC ACTIVITY</scope>
    <scope>SUBSTRATE SPECIFICITY</scope>
    <scope>PATHWAY</scope>
    <source>
        <strain evidence="15">KR1</strain>
    </source>
</reference>
<reference key="3">
    <citation type="journal article" date="1991" name="J. Bacteriol.">
        <title>Toluene-4-monooxygenase, a three-component enzyme system that catalyzes the oxidation of toluene to p-cresol in Pseudomonas mendocina KR1.</title>
        <authorList>
            <person name="Whited G.M."/>
            <person name="Gibson D.T."/>
        </authorList>
    </citation>
    <scope>FUNCTION</scope>
    <scope>CATALYTIC ACTIVITY</scope>
    <scope>BIOPHYSICOCHEMICAL PROPERTIES</scope>
    <scope>ACTIVITY REGULATION</scope>
    <source>
        <strain>KR1</strain>
    </source>
</reference>
<reference key="4">
    <citation type="journal article" date="2008" name="Proc. Natl. Acad. Sci. U.S.A.">
        <title>Structural consequences of effector protein complex formation in a diiron hydroxylase.</title>
        <authorList>
            <person name="Bailey L.J."/>
            <person name="McCoy J.G."/>
            <person name="Phillips G.N. Jr."/>
            <person name="Fox B.G."/>
        </authorList>
    </citation>
    <scope>X-RAY CRYSTALLOGRAPHY (1.68 ANGSTROMS)</scope>
    <scope>SUBUNIT</scope>
</reference>
<reference key="5">
    <citation type="journal article" date="2009" name="Biochemistry">
        <title>Role for threonine 201 in the catalytic cycle of the soluble diiron hydroxylase toluene 4-monooxygenase.</title>
        <authorList>
            <person name="Elsen N.L."/>
            <person name="Bailey L.J."/>
            <person name="Hauser A.D."/>
            <person name="Fox B.G."/>
        </authorList>
    </citation>
    <scope>X-RAY CRYSTALLOGRAPHY (1.52 ANGSTROMS)</scope>
    <scope>FUNCTION</scope>
    <scope>CATALYTIC ACTIVITY</scope>
    <scope>SUBUNIT</scope>
</reference>
<reference key="6">
    <citation type="journal article" date="2009" name="Biochemistry">
        <title>Crystallographic and catalytic studies of the peroxide-shunt reaction in a diiron hydroxylase.</title>
        <authorList>
            <person name="Bailey L.J."/>
            <person name="Fox B.G."/>
        </authorList>
    </citation>
    <scope>X-RAY CRYSTALLOGRAPHY (1.90 ANGSTROMS)</scope>
    <scope>FUNCTION</scope>
    <scope>CATALYTIC ACTIVITY</scope>
    <scope>SUBUNIT</scope>
</reference>
<reference key="7">
    <citation type="journal article" date="2012" name="Biochemistry">
        <title>Crystallographic analysis of active site contributions to regiospecificity in the diiron enzyme toluene 4-monooxygenase.</title>
        <authorList>
            <person name="Bailey L.J."/>
            <person name="Acheson J.F."/>
            <person name="McCoy J.G."/>
            <person name="Elsen N.L."/>
            <person name="Phillips G.N. Jr."/>
            <person name="Fox B.G."/>
        </authorList>
    </citation>
    <scope>X-RAY CRYSTALLOGRAPHY (1.75 ANGSTROMS) OF 1-307</scope>
    <scope>SUBUNIT</scope>
    <source>
        <strain>KR1</strain>
    </source>
</reference>
<reference key="8">
    <citation type="journal article" date="2014" name="Nat. Commun.">
        <title>Structural basis for biomolecular recognition in overlapping binding sites in a diiron enzyme system.</title>
        <authorList>
            <person name="Acheson J.F."/>
            <person name="Bailey L.J."/>
            <person name="Elsen N.L."/>
            <person name="Fox B.G."/>
        </authorList>
    </citation>
    <scope>X-RAY CRYSTALLOGRAPHY (2.05 ANGSTROMS) OF 2-306</scope>
    <scope>SUBUNIT</scope>
</reference>
<reference key="9">
    <citation type="journal article" date="2017" name="Nature">
        <title>In-crystal reaction cycle of a toluene-bound diiron hydroxylase.</title>
        <authorList>
            <person name="Acheson J.F."/>
            <person name="Bailey L.J."/>
            <person name="Brunold T.C."/>
            <person name="Fox B.G."/>
        </authorList>
    </citation>
    <scope>X-RAY CRYSTALLOGRAPHY (1.72 ANGSTROMS)</scope>
    <scope>SUBUNIT</scope>
</reference>
<gene>
    <name evidence="11" type="primary">tmoE</name>
</gene>
<feature type="initiator methionine" description="Removed" evidence="2">
    <location>
        <position position="1"/>
    </location>
</feature>
<feature type="chain" id="PRO_0000072603" description="Toluene-4-monooxygenase system, hydroxylase component subunit beta">
    <location>
        <begin position="2"/>
        <end position="327"/>
    </location>
</feature>
<feature type="sequence conflict" description="In Ref. 1; AAA26003." evidence="12" ref="1">
    <original>P</original>
    <variation>H</variation>
    <location>
        <position position="310"/>
    </location>
</feature>
<feature type="turn" evidence="16">
    <location>
        <begin position="13"/>
        <end position="17"/>
    </location>
</feature>
<feature type="strand" evidence="17">
    <location>
        <begin position="18"/>
        <end position="20"/>
    </location>
</feature>
<feature type="helix" evidence="16">
    <location>
        <begin position="24"/>
        <end position="29"/>
    </location>
</feature>
<feature type="helix" evidence="16">
    <location>
        <begin position="34"/>
        <end position="36"/>
    </location>
</feature>
<feature type="strand" evidence="16">
    <location>
        <begin position="42"/>
        <end position="45"/>
    </location>
</feature>
<feature type="helix" evidence="16">
    <location>
        <begin position="50"/>
        <end position="58"/>
    </location>
</feature>
<feature type="turn" evidence="16">
    <location>
        <begin position="59"/>
        <end position="61"/>
    </location>
</feature>
<feature type="helix" evidence="16">
    <location>
        <begin position="69"/>
        <end position="71"/>
    </location>
</feature>
<feature type="helix" evidence="16">
    <location>
        <begin position="80"/>
        <end position="103"/>
    </location>
</feature>
<feature type="helix" evidence="16">
    <location>
        <begin position="106"/>
        <end position="109"/>
    </location>
</feature>
<feature type="helix" evidence="16">
    <location>
        <begin position="114"/>
        <end position="121"/>
    </location>
</feature>
<feature type="turn" evidence="16">
    <location>
        <begin position="122"/>
        <end position="124"/>
    </location>
</feature>
<feature type="helix" evidence="16">
    <location>
        <begin position="125"/>
        <end position="142"/>
    </location>
</feature>
<feature type="helix" evidence="16">
    <location>
        <begin position="146"/>
        <end position="176"/>
    </location>
</feature>
<feature type="turn" evidence="16">
    <location>
        <begin position="182"/>
        <end position="184"/>
    </location>
</feature>
<feature type="helix" evidence="16">
    <location>
        <begin position="186"/>
        <end position="192"/>
    </location>
</feature>
<feature type="helix" evidence="16">
    <location>
        <begin position="194"/>
        <end position="206"/>
    </location>
</feature>
<feature type="helix" evidence="16">
    <location>
        <begin position="212"/>
        <end position="221"/>
    </location>
</feature>
<feature type="helix" evidence="16">
    <location>
        <begin position="223"/>
        <end position="230"/>
    </location>
</feature>
<feature type="helix" evidence="16">
    <location>
        <begin position="232"/>
        <end position="241"/>
    </location>
</feature>
<feature type="helix" evidence="16">
    <location>
        <begin position="246"/>
        <end position="272"/>
    </location>
</feature>
<feature type="helix" evidence="16">
    <location>
        <begin position="278"/>
        <end position="305"/>
    </location>
</feature>
<keyword id="KW-0002">3D-structure</keyword>
<keyword id="KW-0058">Aromatic hydrocarbons catabolism</keyword>
<keyword id="KW-0903">Direct protein sequencing</keyword>
<keyword id="KW-0503">Monooxygenase</keyword>
<keyword id="KW-0520">NAD</keyword>
<keyword id="KW-0560">Oxidoreductase</keyword>
<proteinExistence type="evidence at protein level"/>
<organism>
    <name type="scientific">Ectopseudomonas mendocina</name>
    <name type="common">Pseudomonas mendocina</name>
    <dbReference type="NCBI Taxonomy" id="300"/>
    <lineage>
        <taxon>Bacteria</taxon>
        <taxon>Pseudomonadati</taxon>
        <taxon>Pseudomonadota</taxon>
        <taxon>Gammaproteobacteria</taxon>
        <taxon>Pseudomonadales</taxon>
        <taxon>Pseudomonadaceae</taxon>
        <taxon>Ectopseudomonas</taxon>
    </lineage>
</organism>
<accession>Q00460</accession>
<accession>Q6Q8Q3</accession>
<comment type="function">
    <text evidence="1 2 4 5 6">Component of the toluene-4-monooxygenase multicomponent enzyme system which catalyzes the O2- and NADH-dependent hydroxylation of toluene to form p-cresol (PubMed:15240250, PubMed:1885512, PubMed:19290655, PubMed:19705873, PubMed:2019563). Also able to convert benzene to phenol, catechol, and 1,2,3-trihydroxybenzene by successive hydroxylations (PubMed:15240250).</text>
</comment>
<comment type="catalytic activity">
    <reaction evidence="1 4 5 14">
        <text>toluene + NADH + O2 + H(+) = 4-methylphenol + NAD(+) + H2O</text>
        <dbReference type="Rhea" id="RHEA:41380"/>
        <dbReference type="ChEBI" id="CHEBI:15377"/>
        <dbReference type="ChEBI" id="CHEBI:15378"/>
        <dbReference type="ChEBI" id="CHEBI:15379"/>
        <dbReference type="ChEBI" id="CHEBI:17578"/>
        <dbReference type="ChEBI" id="CHEBI:17847"/>
        <dbReference type="ChEBI" id="CHEBI:57540"/>
        <dbReference type="ChEBI" id="CHEBI:57945"/>
        <dbReference type="EC" id="1.14.13.236"/>
    </reaction>
</comment>
<comment type="activity regulation">
    <text evidence="6">Inhibited by Zn(2+) and Cu(2+).</text>
</comment>
<comment type="biophysicochemical properties">
    <phDependence>
        <text evidence="6">Optimum pH is 6.8.</text>
    </phDependence>
</comment>
<comment type="pathway">
    <text evidence="13">Xenobiotic degradation; toluene degradation.</text>
</comment>
<comment type="subunit">
    <text evidence="3 4 5 7 8 9">The alkene monooxygenase multicomponent enzyme system is composed of an electron transfer component and a monooxygenase component interacting with the effector protein TmoD. The electron transfer component is composed of a ferredoxin reductase (TmoF) and a ferredoxin (TmoC), and the monooxygenase component is formed by a heterohexamer (dimer of heterotrimers) of two alpha subunits (TmoA), two beta subunits (TmoE) and two gamma subunits (TmoB).</text>
</comment>
<comment type="disruption phenotype">
    <text evidence="2">Cells lacking this gene show a complete loss of toluene-4-monooxygenase activity.</text>
</comment>
<comment type="similarity">
    <text evidence="12">Belongs to the TmoE/XamoE family.</text>
</comment>
<sequence>MSFESKKPMRTWSHLAEMRKKPSEYDIVSRKLHYSTNNPDSPWELSPDSPMNLWYKQYRNASPLKHDNWDAFTDPDQLVYRTYNLMQDGQESYVQSLFDQFNEREHDQMVREGWEHTMARCYSPLRYLFHCLQMSSAYVQQMAPASTISNCCILQTADSLRWLTHTAYRTHELSLTYPDAGLGEHERELWEKEPGWQGLRELMEKQLTAFDWGEAFVSLNLVVKPMIVESIFKPLQQQAWENNDTLLPLLIDSQLKDAERHSRWSKALVKHALENPDNHAVIEGWIEKWRPLADRAAEAYLSMLSSDILPAQYLERSTSLRASILTV</sequence>
<dbReference type="EC" id="1.14.13.236" evidence="1 4 5 14"/>
<dbReference type="EMBL" id="M65106">
    <property type="protein sequence ID" value="AAA26003.1"/>
    <property type="molecule type" value="Genomic_DNA"/>
</dbReference>
<dbReference type="EMBL" id="AY552601">
    <property type="protein sequence ID" value="AAS66664.1"/>
    <property type="molecule type" value="Genomic_DNA"/>
</dbReference>
<dbReference type="PDB" id="3DHG">
    <property type="method" value="X-ray"/>
    <property type="resolution" value="1.85 A"/>
    <property type="chains" value="B/E=1-327"/>
</dbReference>
<dbReference type="PDB" id="3DHH">
    <property type="method" value="X-ray"/>
    <property type="resolution" value="1.94 A"/>
    <property type="chains" value="B=1-327"/>
</dbReference>
<dbReference type="PDB" id="3DHI">
    <property type="method" value="X-ray"/>
    <property type="resolution" value="1.68 A"/>
    <property type="chains" value="B=1-327"/>
</dbReference>
<dbReference type="PDB" id="3GE3">
    <property type="method" value="X-ray"/>
    <property type="resolution" value="1.52 A"/>
    <property type="chains" value="B=1-327"/>
</dbReference>
<dbReference type="PDB" id="3GE8">
    <property type="method" value="X-ray"/>
    <property type="resolution" value="2.19 A"/>
    <property type="chains" value="B/F=1-327"/>
</dbReference>
<dbReference type="PDB" id="3I5J">
    <property type="method" value="X-ray"/>
    <property type="resolution" value="1.90 A"/>
    <property type="chains" value="B=1-327"/>
</dbReference>
<dbReference type="PDB" id="3I63">
    <property type="method" value="X-ray"/>
    <property type="resolution" value="2.09 A"/>
    <property type="chains" value="B=1-327"/>
</dbReference>
<dbReference type="PDB" id="3Q14">
    <property type="method" value="X-ray"/>
    <property type="resolution" value="1.75 A"/>
    <property type="chains" value="B=1-307"/>
</dbReference>
<dbReference type="PDB" id="3Q2A">
    <property type="method" value="X-ray"/>
    <property type="resolution" value="1.99 A"/>
    <property type="chains" value="B=1-307"/>
</dbReference>
<dbReference type="PDB" id="3Q3M">
    <property type="method" value="X-ray"/>
    <property type="resolution" value="1.75 A"/>
    <property type="chains" value="B/F=1-307"/>
</dbReference>
<dbReference type="PDB" id="3Q3N">
    <property type="method" value="X-ray"/>
    <property type="resolution" value="1.84 A"/>
    <property type="chains" value="B=1-307"/>
</dbReference>
<dbReference type="PDB" id="3Q3O">
    <property type="method" value="X-ray"/>
    <property type="resolution" value="1.95 A"/>
    <property type="chains" value="B=1-307"/>
</dbReference>
<dbReference type="PDB" id="3RI7">
    <property type="method" value="X-ray"/>
    <property type="resolution" value="2.10 A"/>
    <property type="chains" value="B=2-306"/>
</dbReference>
<dbReference type="PDB" id="3RMK">
    <property type="method" value="X-ray"/>
    <property type="resolution" value="1.95 A"/>
    <property type="chains" value="B/E=2-307"/>
</dbReference>
<dbReference type="PDB" id="4P1B">
    <property type="method" value="X-ray"/>
    <property type="resolution" value="2.05 A"/>
    <property type="chains" value="B/E=2-306"/>
</dbReference>
<dbReference type="PDB" id="4P1C">
    <property type="method" value="X-ray"/>
    <property type="resolution" value="2.40 A"/>
    <property type="chains" value="B/E=2-306"/>
</dbReference>
<dbReference type="PDB" id="5TDS">
    <property type="method" value="X-ray"/>
    <property type="resolution" value="1.72 A"/>
    <property type="chains" value="B/E=1-327"/>
</dbReference>
<dbReference type="PDB" id="5TDT">
    <property type="method" value="X-ray"/>
    <property type="resolution" value="1.82 A"/>
    <property type="chains" value="B/F=1-307"/>
</dbReference>
<dbReference type="PDB" id="5TDU">
    <property type="method" value="X-ray"/>
    <property type="resolution" value="1.74 A"/>
    <property type="chains" value="B=1-308"/>
</dbReference>
<dbReference type="PDB" id="5TDV">
    <property type="method" value="X-ray"/>
    <property type="resolution" value="2.00 A"/>
    <property type="chains" value="B/F=1-327"/>
</dbReference>
<dbReference type="PDBsum" id="3DHG"/>
<dbReference type="PDBsum" id="3DHH"/>
<dbReference type="PDBsum" id="3DHI"/>
<dbReference type="PDBsum" id="3GE3"/>
<dbReference type="PDBsum" id="3GE8"/>
<dbReference type="PDBsum" id="3I5J"/>
<dbReference type="PDBsum" id="3I63"/>
<dbReference type="PDBsum" id="3Q14"/>
<dbReference type="PDBsum" id="3Q2A"/>
<dbReference type="PDBsum" id="3Q3M"/>
<dbReference type="PDBsum" id="3Q3N"/>
<dbReference type="PDBsum" id="3Q3O"/>
<dbReference type="PDBsum" id="3RI7"/>
<dbReference type="PDBsum" id="3RMK"/>
<dbReference type="PDBsum" id="4P1B"/>
<dbReference type="PDBsum" id="4P1C"/>
<dbReference type="PDBsum" id="5TDS"/>
<dbReference type="PDBsum" id="5TDT"/>
<dbReference type="PDBsum" id="5TDU"/>
<dbReference type="PDBsum" id="5TDV"/>
<dbReference type="SMR" id="Q00460"/>
<dbReference type="DIP" id="DIP-48647N"/>
<dbReference type="IntAct" id="Q00460">
    <property type="interactions" value="1"/>
</dbReference>
<dbReference type="KEGG" id="ag:AAA26003"/>
<dbReference type="BioCyc" id="MetaCyc:MONOMER-2508"/>
<dbReference type="BRENDA" id="1.14.13.236">
    <property type="organism ID" value="31258"/>
</dbReference>
<dbReference type="UniPathway" id="UPA00273"/>
<dbReference type="EvolutionaryTrace" id="Q00460"/>
<dbReference type="GO" id="GO:0018638">
    <property type="term" value="F:toluene 4-monooxygenase activity"/>
    <property type="evidence" value="ECO:0007669"/>
    <property type="project" value="UniProtKB-EC"/>
</dbReference>
<dbReference type="GO" id="GO:0042203">
    <property type="term" value="P:toluene catabolic process"/>
    <property type="evidence" value="ECO:0007669"/>
    <property type="project" value="UniProtKB-UniPathway"/>
</dbReference>
<dbReference type="CDD" id="cd01058">
    <property type="entry name" value="AAMH_B"/>
    <property type="match status" value="1"/>
</dbReference>
<dbReference type="Gene3D" id="1.10.620.20">
    <property type="entry name" value="Ribonucleotide Reductase, subunit A"/>
    <property type="match status" value="1"/>
</dbReference>
<dbReference type="InterPro" id="IPR009078">
    <property type="entry name" value="Ferritin-like_SF"/>
</dbReference>
<dbReference type="InterPro" id="IPR012078">
    <property type="entry name" value="MP_mOase_hydro"/>
</dbReference>
<dbReference type="InterPro" id="IPR003430">
    <property type="entry name" value="Phenol_Hydrox"/>
</dbReference>
<dbReference type="InterPro" id="IPR012348">
    <property type="entry name" value="RNR-like"/>
</dbReference>
<dbReference type="Pfam" id="PF02332">
    <property type="entry name" value="Phenol_Hydrox"/>
    <property type="match status" value="1"/>
</dbReference>
<dbReference type="PIRSF" id="PIRSF000040">
    <property type="entry name" value="MMOH_comp"/>
    <property type="match status" value="1"/>
</dbReference>
<dbReference type="SUPFAM" id="SSF47240">
    <property type="entry name" value="Ferritin-like"/>
    <property type="match status" value="1"/>
</dbReference>
<protein>
    <recommendedName>
        <fullName evidence="10">Toluene-4-monooxygenase system, hydroxylase component subunit beta</fullName>
        <shortName evidence="11">T4MO</shortName>
        <ecNumber evidence="1 4 5 14">1.14.13.236</ecNumber>
    </recommendedName>
    <alternativeName>
        <fullName evidence="11">Toluene-4-monooxygenase hydroxylase subunit</fullName>
        <shortName evidence="11">T4moH</shortName>
    </alternativeName>
    <alternativeName>
        <fullName evidence="11">Toluene-4-monooxygenase system protein E</fullName>
        <shortName evidence="11">T4moE</shortName>
    </alternativeName>
</protein>
<evidence type="ECO:0000269" key="1">
    <source>
    </source>
</evidence>
<evidence type="ECO:0000269" key="2">
    <source>
    </source>
</evidence>
<evidence type="ECO:0000269" key="3">
    <source>
    </source>
</evidence>
<evidence type="ECO:0000269" key="4">
    <source>
    </source>
</evidence>
<evidence type="ECO:0000269" key="5">
    <source>
    </source>
</evidence>
<evidence type="ECO:0000269" key="6">
    <source>
    </source>
</evidence>
<evidence type="ECO:0000269" key="7">
    <source>
    </source>
</evidence>
<evidence type="ECO:0000269" key="8">
    <source>
    </source>
</evidence>
<evidence type="ECO:0000269" key="9">
    <source>
    </source>
</evidence>
<evidence type="ECO:0000303" key="10">
    <source>
    </source>
</evidence>
<evidence type="ECO:0000303" key="11">
    <source>
    </source>
</evidence>
<evidence type="ECO:0000305" key="12"/>
<evidence type="ECO:0000305" key="13">
    <source>
    </source>
</evidence>
<evidence type="ECO:0000305" key="14">
    <source>
    </source>
</evidence>
<evidence type="ECO:0000312" key="15">
    <source>
        <dbReference type="EMBL" id="AAS66664.1"/>
    </source>
</evidence>
<evidence type="ECO:0007829" key="16">
    <source>
        <dbReference type="PDB" id="3GE3"/>
    </source>
</evidence>
<evidence type="ECO:0007829" key="17">
    <source>
        <dbReference type="PDB" id="3I63"/>
    </source>
</evidence>
<name>TMOE_ECTME</name>